<name>P2C52_ARATH</name>
<evidence type="ECO:0000250" key="1"/>
<evidence type="ECO:0000255" key="2">
    <source>
        <dbReference type="PROSITE-ProRule" id="PRU01082"/>
    </source>
</evidence>
<evidence type="ECO:0000256" key="3">
    <source>
        <dbReference type="SAM" id="MobiDB-lite"/>
    </source>
</evidence>
<evidence type="ECO:0000305" key="4"/>
<accession>Q8GY60</accession>
<reference key="1">
    <citation type="journal article" date="1999" name="Nature">
        <title>Sequence and analysis of chromosome 4 of the plant Arabidopsis thaliana.</title>
        <authorList>
            <person name="Mayer K.F.X."/>
            <person name="Schueller C."/>
            <person name="Wambutt R."/>
            <person name="Murphy G."/>
            <person name="Volckaert G."/>
            <person name="Pohl T."/>
            <person name="Duesterhoeft A."/>
            <person name="Stiekema W."/>
            <person name="Entian K.-D."/>
            <person name="Terryn N."/>
            <person name="Harris B."/>
            <person name="Ansorge W."/>
            <person name="Brandt P."/>
            <person name="Grivell L.A."/>
            <person name="Rieger M."/>
            <person name="Weichselgartner M."/>
            <person name="de Simone V."/>
            <person name="Obermaier B."/>
            <person name="Mache R."/>
            <person name="Mueller M."/>
            <person name="Kreis M."/>
            <person name="Delseny M."/>
            <person name="Puigdomenech P."/>
            <person name="Watson M."/>
            <person name="Schmidtheini T."/>
            <person name="Reichert B."/>
            <person name="Portetelle D."/>
            <person name="Perez-Alonso M."/>
            <person name="Boutry M."/>
            <person name="Bancroft I."/>
            <person name="Vos P."/>
            <person name="Hoheisel J."/>
            <person name="Zimmermann W."/>
            <person name="Wedler H."/>
            <person name="Ridley P."/>
            <person name="Langham S.-A."/>
            <person name="McCullagh B."/>
            <person name="Bilham L."/>
            <person name="Robben J."/>
            <person name="van der Schueren J."/>
            <person name="Grymonprez B."/>
            <person name="Chuang Y.-J."/>
            <person name="Vandenbussche F."/>
            <person name="Braeken M."/>
            <person name="Weltjens I."/>
            <person name="Voet M."/>
            <person name="Bastiaens I."/>
            <person name="Aert R."/>
            <person name="Defoor E."/>
            <person name="Weitzenegger T."/>
            <person name="Bothe G."/>
            <person name="Ramsperger U."/>
            <person name="Hilbert H."/>
            <person name="Braun M."/>
            <person name="Holzer E."/>
            <person name="Brandt A."/>
            <person name="Peters S."/>
            <person name="van Staveren M."/>
            <person name="Dirkse W."/>
            <person name="Mooijman P."/>
            <person name="Klein Lankhorst R."/>
            <person name="Rose M."/>
            <person name="Hauf J."/>
            <person name="Koetter P."/>
            <person name="Berneiser S."/>
            <person name="Hempel S."/>
            <person name="Feldpausch M."/>
            <person name="Lamberth S."/>
            <person name="Van den Daele H."/>
            <person name="De Keyser A."/>
            <person name="Buysshaert C."/>
            <person name="Gielen J."/>
            <person name="Villarroel R."/>
            <person name="De Clercq R."/>
            <person name="van Montagu M."/>
            <person name="Rogers J."/>
            <person name="Cronin A."/>
            <person name="Quail M.A."/>
            <person name="Bray-Allen S."/>
            <person name="Clark L."/>
            <person name="Doggett J."/>
            <person name="Hall S."/>
            <person name="Kay M."/>
            <person name="Lennard N."/>
            <person name="McLay K."/>
            <person name="Mayes R."/>
            <person name="Pettett A."/>
            <person name="Rajandream M.A."/>
            <person name="Lyne M."/>
            <person name="Benes V."/>
            <person name="Rechmann S."/>
            <person name="Borkova D."/>
            <person name="Bloecker H."/>
            <person name="Scharfe M."/>
            <person name="Grimm M."/>
            <person name="Loehnert T.-H."/>
            <person name="Dose S."/>
            <person name="de Haan M."/>
            <person name="Maarse A.C."/>
            <person name="Schaefer M."/>
            <person name="Mueller-Auer S."/>
            <person name="Gabel C."/>
            <person name="Fuchs M."/>
            <person name="Fartmann B."/>
            <person name="Granderath K."/>
            <person name="Dauner D."/>
            <person name="Herzl A."/>
            <person name="Neumann S."/>
            <person name="Argiriou A."/>
            <person name="Vitale D."/>
            <person name="Liguori R."/>
            <person name="Piravandi E."/>
            <person name="Massenet O."/>
            <person name="Quigley F."/>
            <person name="Clabauld G."/>
            <person name="Muendlein A."/>
            <person name="Felber R."/>
            <person name="Schnabl S."/>
            <person name="Hiller R."/>
            <person name="Schmidt W."/>
            <person name="Lecharny A."/>
            <person name="Aubourg S."/>
            <person name="Chefdor F."/>
            <person name="Cooke R."/>
            <person name="Berger C."/>
            <person name="Monfort A."/>
            <person name="Casacuberta E."/>
            <person name="Gibbons T."/>
            <person name="Weber N."/>
            <person name="Vandenbol M."/>
            <person name="Bargues M."/>
            <person name="Terol J."/>
            <person name="Torres A."/>
            <person name="Perez-Perez A."/>
            <person name="Purnelle B."/>
            <person name="Bent E."/>
            <person name="Johnson S."/>
            <person name="Tacon D."/>
            <person name="Jesse T."/>
            <person name="Heijnen L."/>
            <person name="Schwarz S."/>
            <person name="Scholler P."/>
            <person name="Heber S."/>
            <person name="Francs P."/>
            <person name="Bielke C."/>
            <person name="Frishman D."/>
            <person name="Haase D."/>
            <person name="Lemcke K."/>
            <person name="Mewes H.-W."/>
            <person name="Stocker S."/>
            <person name="Zaccaria P."/>
            <person name="Bevan M."/>
            <person name="Wilson R.K."/>
            <person name="de la Bastide M."/>
            <person name="Habermann K."/>
            <person name="Parnell L."/>
            <person name="Dedhia N."/>
            <person name="Gnoj L."/>
            <person name="Schutz K."/>
            <person name="Huang E."/>
            <person name="Spiegel L."/>
            <person name="Sekhon M."/>
            <person name="Murray J."/>
            <person name="Sheet P."/>
            <person name="Cordes M."/>
            <person name="Abu-Threideh J."/>
            <person name="Stoneking T."/>
            <person name="Kalicki J."/>
            <person name="Graves T."/>
            <person name="Harmon G."/>
            <person name="Edwards J."/>
            <person name="Latreille P."/>
            <person name="Courtney L."/>
            <person name="Cloud J."/>
            <person name="Abbott A."/>
            <person name="Scott K."/>
            <person name="Johnson D."/>
            <person name="Minx P."/>
            <person name="Bentley D."/>
            <person name="Fulton B."/>
            <person name="Miller N."/>
            <person name="Greco T."/>
            <person name="Kemp K."/>
            <person name="Kramer J."/>
            <person name="Fulton L."/>
            <person name="Mardis E."/>
            <person name="Dante M."/>
            <person name="Pepin K."/>
            <person name="Hillier L.W."/>
            <person name="Nelson J."/>
            <person name="Spieth J."/>
            <person name="Ryan E."/>
            <person name="Andrews S."/>
            <person name="Geisel C."/>
            <person name="Layman D."/>
            <person name="Du H."/>
            <person name="Ali J."/>
            <person name="Berghoff A."/>
            <person name="Jones K."/>
            <person name="Drone K."/>
            <person name="Cotton M."/>
            <person name="Joshu C."/>
            <person name="Antonoiu B."/>
            <person name="Zidanic M."/>
            <person name="Strong C."/>
            <person name="Sun H."/>
            <person name="Lamar B."/>
            <person name="Yordan C."/>
            <person name="Ma P."/>
            <person name="Zhong J."/>
            <person name="Preston R."/>
            <person name="Vil D."/>
            <person name="Shekher M."/>
            <person name="Matero A."/>
            <person name="Shah R."/>
            <person name="Swaby I.K."/>
            <person name="O'Shaughnessy A."/>
            <person name="Rodriguez M."/>
            <person name="Hoffman J."/>
            <person name="Till S."/>
            <person name="Granat S."/>
            <person name="Shohdy N."/>
            <person name="Hasegawa A."/>
            <person name="Hameed A."/>
            <person name="Lodhi M."/>
            <person name="Johnson A."/>
            <person name="Chen E."/>
            <person name="Marra M.A."/>
            <person name="Martienssen R."/>
            <person name="McCombie W.R."/>
        </authorList>
    </citation>
    <scope>NUCLEOTIDE SEQUENCE [LARGE SCALE GENOMIC DNA]</scope>
    <source>
        <strain>cv. Columbia</strain>
    </source>
</reference>
<reference key="2">
    <citation type="journal article" date="2017" name="Plant J.">
        <title>Araport11: a complete reannotation of the Arabidopsis thaliana reference genome.</title>
        <authorList>
            <person name="Cheng C.Y."/>
            <person name="Krishnakumar V."/>
            <person name="Chan A.P."/>
            <person name="Thibaud-Nissen F."/>
            <person name="Schobel S."/>
            <person name="Town C.D."/>
        </authorList>
    </citation>
    <scope>GENOME REANNOTATION</scope>
    <source>
        <strain>cv. Columbia</strain>
    </source>
</reference>
<reference key="3">
    <citation type="journal article" date="2002" name="Science">
        <title>Functional annotation of a full-length Arabidopsis cDNA collection.</title>
        <authorList>
            <person name="Seki M."/>
            <person name="Narusaka M."/>
            <person name="Kamiya A."/>
            <person name="Ishida J."/>
            <person name="Satou M."/>
            <person name="Sakurai T."/>
            <person name="Nakajima M."/>
            <person name="Enju A."/>
            <person name="Akiyama K."/>
            <person name="Oono Y."/>
            <person name="Muramatsu M."/>
            <person name="Hayashizaki Y."/>
            <person name="Kawai J."/>
            <person name="Carninci P."/>
            <person name="Itoh M."/>
            <person name="Ishii Y."/>
            <person name="Arakawa T."/>
            <person name="Shibata K."/>
            <person name="Shinagawa A."/>
            <person name="Shinozaki K."/>
        </authorList>
    </citation>
    <scope>NUCLEOTIDE SEQUENCE [LARGE SCALE MRNA]</scope>
    <source>
        <strain>cv. Columbia</strain>
    </source>
</reference>
<reference key="4">
    <citation type="journal article" date="2003" name="Science">
        <title>Empirical analysis of transcriptional activity in the Arabidopsis genome.</title>
        <authorList>
            <person name="Yamada K."/>
            <person name="Lim J."/>
            <person name="Dale J.M."/>
            <person name="Chen H."/>
            <person name="Shinn P."/>
            <person name="Palm C.J."/>
            <person name="Southwick A.M."/>
            <person name="Wu H.C."/>
            <person name="Kim C.J."/>
            <person name="Nguyen M."/>
            <person name="Pham P.K."/>
            <person name="Cheuk R.F."/>
            <person name="Karlin-Newmann G."/>
            <person name="Liu S.X."/>
            <person name="Lam B."/>
            <person name="Sakano H."/>
            <person name="Wu T."/>
            <person name="Yu G."/>
            <person name="Miranda M."/>
            <person name="Quach H.L."/>
            <person name="Tripp M."/>
            <person name="Chang C.H."/>
            <person name="Lee J.M."/>
            <person name="Toriumi M.J."/>
            <person name="Chan M.M."/>
            <person name="Tang C.C."/>
            <person name="Onodera C.S."/>
            <person name="Deng J.M."/>
            <person name="Akiyama K."/>
            <person name="Ansari Y."/>
            <person name="Arakawa T."/>
            <person name="Banh J."/>
            <person name="Banno F."/>
            <person name="Bowser L."/>
            <person name="Brooks S.Y."/>
            <person name="Carninci P."/>
            <person name="Chao Q."/>
            <person name="Choy N."/>
            <person name="Enju A."/>
            <person name="Goldsmith A.D."/>
            <person name="Gurjal M."/>
            <person name="Hansen N.F."/>
            <person name="Hayashizaki Y."/>
            <person name="Johnson-Hopson C."/>
            <person name="Hsuan V.W."/>
            <person name="Iida K."/>
            <person name="Karnes M."/>
            <person name="Khan S."/>
            <person name="Koesema E."/>
            <person name="Ishida J."/>
            <person name="Jiang P.X."/>
            <person name="Jones T."/>
            <person name="Kawai J."/>
            <person name="Kamiya A."/>
            <person name="Meyers C."/>
            <person name="Nakajima M."/>
            <person name="Narusaka M."/>
            <person name="Seki M."/>
            <person name="Sakurai T."/>
            <person name="Satou M."/>
            <person name="Tamse R."/>
            <person name="Vaysberg M."/>
            <person name="Wallender E.K."/>
            <person name="Wong C."/>
            <person name="Yamamura Y."/>
            <person name="Yuan S."/>
            <person name="Shinozaki K."/>
            <person name="Davis R.W."/>
            <person name="Theologis A."/>
            <person name="Ecker J.R."/>
        </authorList>
    </citation>
    <scope>NUCLEOTIDE SEQUENCE [LARGE SCALE MRNA]</scope>
    <source>
        <strain>cv. Columbia</strain>
    </source>
</reference>
<reference key="5">
    <citation type="journal article" date="2008" name="BMC Genomics">
        <title>Genome-wide and expression analysis of protein phosphatase 2C in rice and Arabidopsis.</title>
        <authorList>
            <person name="Xue T."/>
            <person name="Wang D."/>
            <person name="Zhang S."/>
            <person name="Ehlting J."/>
            <person name="Ni F."/>
            <person name="Jacab S."/>
            <person name="Zheng C."/>
            <person name="Zhong Y."/>
        </authorList>
    </citation>
    <scope>GENE FAMILY</scope>
    <scope>NOMENCLATURE</scope>
</reference>
<gene>
    <name type="ordered locus">At4g03415</name>
    <name type="ORF">F9H3</name>
</gene>
<feature type="chain" id="PRO_0000367976" description="Probable protein phosphatase 2C 52">
    <location>
        <begin position="1"/>
        <end position="468"/>
    </location>
</feature>
<feature type="domain" description="PPM-type phosphatase" evidence="2">
    <location>
        <begin position="67"/>
        <end position="372"/>
    </location>
</feature>
<feature type="region of interest" description="Disordered" evidence="3">
    <location>
        <begin position="413"/>
        <end position="442"/>
    </location>
</feature>
<feature type="compositionally biased region" description="Polar residues" evidence="3">
    <location>
        <begin position="413"/>
        <end position="429"/>
    </location>
</feature>
<feature type="binding site" evidence="1">
    <location>
        <position position="102"/>
    </location>
    <ligand>
        <name>Mn(2+)</name>
        <dbReference type="ChEBI" id="CHEBI:29035"/>
        <label>1</label>
    </ligand>
</feature>
<feature type="binding site" evidence="1">
    <location>
        <position position="102"/>
    </location>
    <ligand>
        <name>Mn(2+)</name>
        <dbReference type="ChEBI" id="CHEBI:29035"/>
        <label>2</label>
    </ligand>
</feature>
<feature type="binding site" evidence="1">
    <location>
        <position position="103"/>
    </location>
    <ligand>
        <name>Mn(2+)</name>
        <dbReference type="ChEBI" id="CHEBI:29035"/>
        <label>1</label>
    </ligand>
</feature>
<feature type="binding site" evidence="1">
    <location>
        <position position="317"/>
    </location>
    <ligand>
        <name>Mn(2+)</name>
        <dbReference type="ChEBI" id="CHEBI:29035"/>
        <label>2</label>
    </ligand>
</feature>
<feature type="binding site" evidence="1">
    <location>
        <position position="363"/>
    </location>
    <ligand>
        <name>Mn(2+)</name>
        <dbReference type="ChEBI" id="CHEBI:29035"/>
        <label>2</label>
    </ligand>
</feature>
<sequence length="468" mass="51851">MGGCVSTSSKSTCSSWSNGEKPVRRPYLGIGCCVSKRAKRTFSDHIVSLQNLTSIPNRITSSSKSRSSCIFTQQGRKGINQDAMIVWEDFMSEDVTFCGVFDGHGPYGHLVARKVRDTLPVKLQFFFQTLQSKQNCSKGTRFRRNSSKSAVQEAVKEGSDEDKLKGLWGEAFLKSFKAMDKELRSHPNLDCFCSGSTGVTILKQGSNLFMGNIGDSRAILGSKDSNDSMVATQLTVDLKPDLPREAERIKRCKGRVFAMEDEPEVPRVWLPYDDAPGLAMARAFGDFCLKEYGVISVPEFTHRVLTDRDQFIVLASDGVWDVLSNEEVVDIVASATSRASAARTLVNSAAREWKLKYPTSKMDDCAVVCLFLDGKMDSESDYDEQGFSSATNAVESDDGQRSEPCLQRNFTVRSSSDQENETYGNVNTETDAEDEKTVGDQNWLGLQGVTRVNSLVQLPRFSEEKSKT</sequence>
<dbReference type="EC" id="3.1.3.16"/>
<dbReference type="EMBL" id="AF071527">
    <property type="status" value="NOT_ANNOTATED_CDS"/>
    <property type="molecule type" value="Genomic_DNA"/>
</dbReference>
<dbReference type="EMBL" id="CP002687">
    <property type="protein sequence ID" value="AEE82317.1"/>
    <property type="molecule type" value="Genomic_DNA"/>
</dbReference>
<dbReference type="EMBL" id="CP002687">
    <property type="protein sequence ID" value="AEE82318.1"/>
    <property type="molecule type" value="Genomic_DNA"/>
</dbReference>
<dbReference type="EMBL" id="CP002687">
    <property type="protein sequence ID" value="ANM68033.1"/>
    <property type="molecule type" value="Genomic_DNA"/>
</dbReference>
<dbReference type="EMBL" id="AK117847">
    <property type="protein sequence ID" value="BAC42488.1"/>
    <property type="molecule type" value="mRNA"/>
</dbReference>
<dbReference type="EMBL" id="BT005384">
    <property type="protein sequence ID" value="AAO63448.1"/>
    <property type="molecule type" value="mRNA"/>
</dbReference>
<dbReference type="SMR" id="Q8GY60"/>
<dbReference type="BioGRID" id="13221">
    <property type="interactions" value="3"/>
</dbReference>
<dbReference type="FunCoup" id="Q8GY60">
    <property type="interactions" value="1134"/>
</dbReference>
<dbReference type="IntAct" id="Q8GY60">
    <property type="interactions" value="2"/>
</dbReference>
<dbReference type="STRING" id="3702.Q8GY60"/>
<dbReference type="iPTMnet" id="Q8GY60"/>
<dbReference type="PaxDb" id="3702-AT4G03415.2"/>
<dbReference type="ProteomicsDB" id="248803"/>
<dbReference type="EnsemblPlants" id="AT4G03415.1">
    <property type="protein sequence ID" value="AT4G03415.1"/>
    <property type="gene ID" value="AT4G03415"/>
</dbReference>
<dbReference type="EnsemblPlants" id="AT4G03415.2">
    <property type="protein sequence ID" value="AT4G03415.2"/>
    <property type="gene ID" value="AT4G03415"/>
</dbReference>
<dbReference type="EnsemblPlants" id="AT4G03415.3">
    <property type="protein sequence ID" value="AT4G03415.3"/>
    <property type="gene ID" value="AT4G03415"/>
</dbReference>
<dbReference type="Gramene" id="AT4G03415.1">
    <property type="protein sequence ID" value="AT4G03415.1"/>
    <property type="gene ID" value="AT4G03415"/>
</dbReference>
<dbReference type="Gramene" id="AT4G03415.2">
    <property type="protein sequence ID" value="AT4G03415.2"/>
    <property type="gene ID" value="AT4G03415"/>
</dbReference>
<dbReference type="Gramene" id="AT4G03415.3">
    <property type="protein sequence ID" value="AT4G03415.3"/>
    <property type="gene ID" value="AT4G03415"/>
</dbReference>
<dbReference type="KEGG" id="ath:AT4G03415"/>
<dbReference type="Araport" id="AT4G03415"/>
<dbReference type="TAIR" id="AT4G03415">
    <property type="gene designation" value="PP2C52"/>
</dbReference>
<dbReference type="eggNOG" id="KOG0698">
    <property type="taxonomic scope" value="Eukaryota"/>
</dbReference>
<dbReference type="HOGENOM" id="CLU_013173_6_0_1"/>
<dbReference type="InParanoid" id="Q8GY60"/>
<dbReference type="OMA" id="RASCIFT"/>
<dbReference type="OrthoDB" id="10264738at2759"/>
<dbReference type="PhylomeDB" id="Q8GY60"/>
<dbReference type="PRO" id="PR:Q8GY60"/>
<dbReference type="Proteomes" id="UP000006548">
    <property type="component" value="Chromosome 4"/>
</dbReference>
<dbReference type="ExpressionAtlas" id="Q8GY60">
    <property type="expression patterns" value="baseline and differential"/>
</dbReference>
<dbReference type="GO" id="GO:0005886">
    <property type="term" value="C:plasma membrane"/>
    <property type="evidence" value="ECO:0000314"/>
    <property type="project" value="TAIR"/>
</dbReference>
<dbReference type="GO" id="GO:0046872">
    <property type="term" value="F:metal ion binding"/>
    <property type="evidence" value="ECO:0007669"/>
    <property type="project" value="UniProtKB-KW"/>
</dbReference>
<dbReference type="GO" id="GO:0004721">
    <property type="term" value="F:phosphoprotein phosphatase activity"/>
    <property type="evidence" value="ECO:0000314"/>
    <property type="project" value="TAIR"/>
</dbReference>
<dbReference type="GO" id="GO:0004722">
    <property type="term" value="F:protein serine/threonine phosphatase activity"/>
    <property type="evidence" value="ECO:0007669"/>
    <property type="project" value="UniProtKB-EC"/>
</dbReference>
<dbReference type="GO" id="GO:0006470">
    <property type="term" value="P:protein dephosphorylation"/>
    <property type="evidence" value="ECO:0000314"/>
    <property type="project" value="TAIR"/>
</dbReference>
<dbReference type="CDD" id="cd00143">
    <property type="entry name" value="PP2Cc"/>
    <property type="match status" value="1"/>
</dbReference>
<dbReference type="FunFam" id="3.60.40.10:FF:000026">
    <property type="entry name" value="probable protein phosphatase 2C 52"/>
    <property type="match status" value="1"/>
</dbReference>
<dbReference type="Gene3D" id="3.60.40.10">
    <property type="entry name" value="PPM-type phosphatase domain"/>
    <property type="match status" value="1"/>
</dbReference>
<dbReference type="InterPro" id="IPR015655">
    <property type="entry name" value="PP2C"/>
</dbReference>
<dbReference type="InterPro" id="IPR036457">
    <property type="entry name" value="PPM-type-like_dom_sf"/>
</dbReference>
<dbReference type="InterPro" id="IPR001932">
    <property type="entry name" value="PPM-type_phosphatase-like_dom"/>
</dbReference>
<dbReference type="PANTHER" id="PTHR47992">
    <property type="entry name" value="PROTEIN PHOSPHATASE"/>
    <property type="match status" value="1"/>
</dbReference>
<dbReference type="Pfam" id="PF00481">
    <property type="entry name" value="PP2C"/>
    <property type="match status" value="1"/>
</dbReference>
<dbReference type="SMART" id="SM00332">
    <property type="entry name" value="PP2Cc"/>
    <property type="match status" value="1"/>
</dbReference>
<dbReference type="SUPFAM" id="SSF81606">
    <property type="entry name" value="PP2C-like"/>
    <property type="match status" value="1"/>
</dbReference>
<dbReference type="PROSITE" id="PS51746">
    <property type="entry name" value="PPM_2"/>
    <property type="match status" value="1"/>
</dbReference>
<keyword id="KW-0378">Hydrolase</keyword>
<keyword id="KW-0460">Magnesium</keyword>
<keyword id="KW-0464">Manganese</keyword>
<keyword id="KW-0479">Metal-binding</keyword>
<keyword id="KW-0904">Protein phosphatase</keyword>
<keyword id="KW-1185">Reference proteome</keyword>
<organism>
    <name type="scientific">Arabidopsis thaliana</name>
    <name type="common">Mouse-ear cress</name>
    <dbReference type="NCBI Taxonomy" id="3702"/>
    <lineage>
        <taxon>Eukaryota</taxon>
        <taxon>Viridiplantae</taxon>
        <taxon>Streptophyta</taxon>
        <taxon>Embryophyta</taxon>
        <taxon>Tracheophyta</taxon>
        <taxon>Spermatophyta</taxon>
        <taxon>Magnoliopsida</taxon>
        <taxon>eudicotyledons</taxon>
        <taxon>Gunneridae</taxon>
        <taxon>Pentapetalae</taxon>
        <taxon>rosids</taxon>
        <taxon>malvids</taxon>
        <taxon>Brassicales</taxon>
        <taxon>Brassicaceae</taxon>
        <taxon>Camelineae</taxon>
        <taxon>Arabidopsis</taxon>
    </lineage>
</organism>
<proteinExistence type="evidence at protein level"/>
<comment type="catalytic activity">
    <reaction>
        <text>O-phospho-L-seryl-[protein] + H2O = L-seryl-[protein] + phosphate</text>
        <dbReference type="Rhea" id="RHEA:20629"/>
        <dbReference type="Rhea" id="RHEA-COMP:9863"/>
        <dbReference type="Rhea" id="RHEA-COMP:11604"/>
        <dbReference type="ChEBI" id="CHEBI:15377"/>
        <dbReference type="ChEBI" id="CHEBI:29999"/>
        <dbReference type="ChEBI" id="CHEBI:43474"/>
        <dbReference type="ChEBI" id="CHEBI:83421"/>
        <dbReference type="EC" id="3.1.3.16"/>
    </reaction>
</comment>
<comment type="catalytic activity">
    <reaction>
        <text>O-phospho-L-threonyl-[protein] + H2O = L-threonyl-[protein] + phosphate</text>
        <dbReference type="Rhea" id="RHEA:47004"/>
        <dbReference type="Rhea" id="RHEA-COMP:11060"/>
        <dbReference type="Rhea" id="RHEA-COMP:11605"/>
        <dbReference type="ChEBI" id="CHEBI:15377"/>
        <dbReference type="ChEBI" id="CHEBI:30013"/>
        <dbReference type="ChEBI" id="CHEBI:43474"/>
        <dbReference type="ChEBI" id="CHEBI:61977"/>
        <dbReference type="EC" id="3.1.3.16"/>
    </reaction>
</comment>
<comment type="cofactor">
    <cofactor evidence="1">
        <name>Mg(2+)</name>
        <dbReference type="ChEBI" id="CHEBI:18420"/>
    </cofactor>
    <cofactor evidence="1">
        <name>Mn(2+)</name>
        <dbReference type="ChEBI" id="CHEBI:29035"/>
    </cofactor>
    <text evidence="1">Binds 2 magnesium or manganese ions per subunit.</text>
</comment>
<comment type="interaction">
    <interactant intactId="EBI-25529942">
        <id>Q8GY60</id>
    </interactant>
    <interactant intactId="EBI-25519488">
        <id>Q9SZU7</id>
        <label>KAI2</label>
    </interactant>
    <organismsDiffer>false</organismsDiffer>
    <experiments>3</experiments>
</comment>
<comment type="interaction">
    <interactant intactId="EBI-25529942">
        <id>Q8GY60</id>
    </interactant>
    <interactant intactId="EBI-25529872">
        <id>Q9SIM9</id>
        <label>MAX2</label>
    </interactant>
    <organismsDiffer>false</organismsDiffer>
    <experiments>3</experiments>
</comment>
<comment type="similarity">
    <text evidence="4">Belongs to the PP2C family.</text>
</comment>
<comment type="sequence caution" evidence="4">
    <conflict type="frameshift">
        <sequence resource="EMBL" id="AF071527"/>
    </conflict>
</comment>
<protein>
    <recommendedName>
        <fullName>Probable protein phosphatase 2C 52</fullName>
        <shortName>AtPP2C52</shortName>
        <ecNumber>3.1.3.16</ecNumber>
    </recommendedName>
</protein>